<protein>
    <recommendedName>
        <fullName evidence="1">Ribosome maturation factor RimM</fullName>
    </recommendedName>
</protein>
<gene>
    <name evidence="1" type="primary">rimM</name>
    <name type="ordered locus">Veis_3940</name>
</gene>
<name>RIMM_VEREI</name>
<feature type="chain" id="PRO_0000351804" description="Ribosome maturation factor RimM">
    <location>
        <begin position="1"/>
        <end position="192"/>
    </location>
</feature>
<feature type="domain" description="PRC barrel" evidence="1">
    <location>
        <begin position="116"/>
        <end position="192"/>
    </location>
</feature>
<sequence>MHTMATALTLEPTALPSDAIEVGRIADAWGLQGWFKVQPYSADPEALFSCKRWYLQPAARGAKAFGGTVLLPIRQAKDHGGMVLAWAQDIDDRNTAEALRGARIFVPRSSFPSPPPGEYYWVDLIGLQVINRQGLALGQVRELRATGAQTLLVLAHEQDGKAGKRMIPFVPAFVDQVELPQKRIIVDWQPDY</sequence>
<organism>
    <name type="scientific">Verminephrobacter eiseniae (strain EF01-2)</name>
    <dbReference type="NCBI Taxonomy" id="391735"/>
    <lineage>
        <taxon>Bacteria</taxon>
        <taxon>Pseudomonadati</taxon>
        <taxon>Pseudomonadota</taxon>
        <taxon>Betaproteobacteria</taxon>
        <taxon>Burkholderiales</taxon>
        <taxon>Comamonadaceae</taxon>
        <taxon>Verminephrobacter</taxon>
    </lineage>
</organism>
<evidence type="ECO:0000255" key="1">
    <source>
        <dbReference type="HAMAP-Rule" id="MF_00014"/>
    </source>
</evidence>
<keyword id="KW-0143">Chaperone</keyword>
<keyword id="KW-0963">Cytoplasm</keyword>
<keyword id="KW-1185">Reference proteome</keyword>
<keyword id="KW-0690">Ribosome biogenesis</keyword>
<keyword id="KW-0698">rRNA processing</keyword>
<dbReference type="EMBL" id="CP000542">
    <property type="protein sequence ID" value="ABM59647.1"/>
    <property type="molecule type" value="Genomic_DNA"/>
</dbReference>
<dbReference type="SMR" id="A1WPU0"/>
<dbReference type="STRING" id="391735.Veis_3940"/>
<dbReference type="KEGG" id="vei:Veis_3940"/>
<dbReference type="eggNOG" id="COG0806">
    <property type="taxonomic scope" value="Bacteria"/>
</dbReference>
<dbReference type="HOGENOM" id="CLU_077636_1_0_4"/>
<dbReference type="Proteomes" id="UP000000374">
    <property type="component" value="Chromosome"/>
</dbReference>
<dbReference type="GO" id="GO:0005737">
    <property type="term" value="C:cytoplasm"/>
    <property type="evidence" value="ECO:0007669"/>
    <property type="project" value="UniProtKB-SubCell"/>
</dbReference>
<dbReference type="GO" id="GO:0005840">
    <property type="term" value="C:ribosome"/>
    <property type="evidence" value="ECO:0007669"/>
    <property type="project" value="InterPro"/>
</dbReference>
<dbReference type="GO" id="GO:0043022">
    <property type="term" value="F:ribosome binding"/>
    <property type="evidence" value="ECO:0007669"/>
    <property type="project" value="InterPro"/>
</dbReference>
<dbReference type="GO" id="GO:0042274">
    <property type="term" value="P:ribosomal small subunit biogenesis"/>
    <property type="evidence" value="ECO:0007669"/>
    <property type="project" value="UniProtKB-UniRule"/>
</dbReference>
<dbReference type="GO" id="GO:0006364">
    <property type="term" value="P:rRNA processing"/>
    <property type="evidence" value="ECO:0007669"/>
    <property type="project" value="UniProtKB-UniRule"/>
</dbReference>
<dbReference type="Gene3D" id="2.30.30.240">
    <property type="entry name" value="PRC-barrel domain"/>
    <property type="match status" value="1"/>
</dbReference>
<dbReference type="Gene3D" id="2.40.30.60">
    <property type="entry name" value="RimM"/>
    <property type="match status" value="1"/>
</dbReference>
<dbReference type="HAMAP" id="MF_00014">
    <property type="entry name" value="Ribosome_mat_RimM"/>
    <property type="match status" value="1"/>
</dbReference>
<dbReference type="InterPro" id="IPR011033">
    <property type="entry name" value="PRC_barrel-like_sf"/>
</dbReference>
<dbReference type="InterPro" id="IPR056792">
    <property type="entry name" value="PRC_RimM"/>
</dbReference>
<dbReference type="InterPro" id="IPR011961">
    <property type="entry name" value="RimM"/>
</dbReference>
<dbReference type="InterPro" id="IPR002676">
    <property type="entry name" value="RimM_N"/>
</dbReference>
<dbReference type="InterPro" id="IPR036976">
    <property type="entry name" value="RimM_N_sf"/>
</dbReference>
<dbReference type="InterPro" id="IPR009000">
    <property type="entry name" value="Transl_B-barrel_sf"/>
</dbReference>
<dbReference type="NCBIfam" id="TIGR02273">
    <property type="entry name" value="16S_RimM"/>
    <property type="match status" value="1"/>
</dbReference>
<dbReference type="PANTHER" id="PTHR33692">
    <property type="entry name" value="RIBOSOME MATURATION FACTOR RIMM"/>
    <property type="match status" value="1"/>
</dbReference>
<dbReference type="PANTHER" id="PTHR33692:SF1">
    <property type="entry name" value="RIBOSOME MATURATION FACTOR RIMM"/>
    <property type="match status" value="1"/>
</dbReference>
<dbReference type="Pfam" id="PF24986">
    <property type="entry name" value="PRC_RimM"/>
    <property type="match status" value="1"/>
</dbReference>
<dbReference type="Pfam" id="PF01782">
    <property type="entry name" value="RimM"/>
    <property type="match status" value="1"/>
</dbReference>
<dbReference type="SUPFAM" id="SSF50346">
    <property type="entry name" value="PRC-barrel domain"/>
    <property type="match status" value="1"/>
</dbReference>
<dbReference type="SUPFAM" id="SSF50447">
    <property type="entry name" value="Translation proteins"/>
    <property type="match status" value="1"/>
</dbReference>
<proteinExistence type="inferred from homology"/>
<reference key="1">
    <citation type="submission" date="2006-12" db="EMBL/GenBank/DDBJ databases">
        <title>Complete sequence of chromosome 1 of Verminephrobacter eiseniae EF01-2.</title>
        <authorList>
            <person name="Copeland A."/>
            <person name="Lucas S."/>
            <person name="Lapidus A."/>
            <person name="Barry K."/>
            <person name="Detter J.C."/>
            <person name="Glavina del Rio T."/>
            <person name="Dalin E."/>
            <person name="Tice H."/>
            <person name="Pitluck S."/>
            <person name="Chertkov O."/>
            <person name="Brettin T."/>
            <person name="Bruce D."/>
            <person name="Han C."/>
            <person name="Tapia R."/>
            <person name="Gilna P."/>
            <person name="Schmutz J."/>
            <person name="Larimer F."/>
            <person name="Land M."/>
            <person name="Hauser L."/>
            <person name="Kyrpides N."/>
            <person name="Kim E."/>
            <person name="Stahl D."/>
            <person name="Richardson P."/>
        </authorList>
    </citation>
    <scope>NUCLEOTIDE SEQUENCE [LARGE SCALE GENOMIC DNA]</scope>
    <source>
        <strain>EF01-2</strain>
    </source>
</reference>
<comment type="function">
    <text evidence="1">An accessory protein needed during the final step in the assembly of 30S ribosomal subunit, possibly for assembly of the head region. Essential for efficient processing of 16S rRNA. May be needed both before and after RbfA during the maturation of 16S rRNA. It has affinity for free ribosomal 30S subunits but not for 70S ribosomes.</text>
</comment>
<comment type="subunit">
    <text evidence="1">Binds ribosomal protein uS19.</text>
</comment>
<comment type="subcellular location">
    <subcellularLocation>
        <location evidence="1">Cytoplasm</location>
    </subcellularLocation>
</comment>
<comment type="domain">
    <text evidence="1">The PRC barrel domain binds ribosomal protein uS19.</text>
</comment>
<comment type="similarity">
    <text evidence="1">Belongs to the RimM family.</text>
</comment>
<accession>A1WPU0</accession>